<proteinExistence type="predicted"/>
<reference key="1">
    <citation type="journal article" date="2003" name="Nucleic Acids Res.">
        <title>What's in the genome of a filamentous fungus? Analysis of the Neurospora genome sequence.</title>
        <authorList>
            <person name="Mannhaupt G."/>
            <person name="Montrone C."/>
            <person name="Haase D."/>
            <person name="Mewes H.-W."/>
            <person name="Aign V."/>
            <person name="Hoheisel J.D."/>
            <person name="Fartmann B."/>
            <person name="Nyakatura G."/>
            <person name="Kempken F."/>
            <person name="Maier J."/>
            <person name="Schulte U."/>
        </authorList>
    </citation>
    <scope>NUCLEOTIDE SEQUENCE [LARGE SCALE GENOMIC DNA]</scope>
    <source>
        <strain>ATCC 24698 / 74-OR23-1A / CBS 708.71 / DSM 1257 / FGSC 987</strain>
    </source>
</reference>
<reference key="2">
    <citation type="journal article" date="2003" name="Nature">
        <title>The genome sequence of the filamentous fungus Neurospora crassa.</title>
        <authorList>
            <person name="Galagan J.E."/>
            <person name="Calvo S.E."/>
            <person name="Borkovich K.A."/>
            <person name="Selker E.U."/>
            <person name="Read N.D."/>
            <person name="Jaffe D.B."/>
            <person name="FitzHugh W."/>
            <person name="Ma L.-J."/>
            <person name="Smirnov S."/>
            <person name="Purcell S."/>
            <person name="Rehman B."/>
            <person name="Elkins T."/>
            <person name="Engels R."/>
            <person name="Wang S."/>
            <person name="Nielsen C.B."/>
            <person name="Butler J."/>
            <person name="Endrizzi M."/>
            <person name="Qui D."/>
            <person name="Ianakiev P."/>
            <person name="Bell-Pedersen D."/>
            <person name="Nelson M.A."/>
            <person name="Werner-Washburne M."/>
            <person name="Selitrennikoff C.P."/>
            <person name="Kinsey J.A."/>
            <person name="Braun E.L."/>
            <person name="Zelter A."/>
            <person name="Schulte U."/>
            <person name="Kothe G.O."/>
            <person name="Jedd G."/>
            <person name="Mewes H.-W."/>
            <person name="Staben C."/>
            <person name="Marcotte E."/>
            <person name="Greenberg D."/>
            <person name="Roy A."/>
            <person name="Foley K."/>
            <person name="Naylor J."/>
            <person name="Stange-Thomann N."/>
            <person name="Barrett R."/>
            <person name="Gnerre S."/>
            <person name="Kamal M."/>
            <person name="Kamvysselis M."/>
            <person name="Mauceli E.W."/>
            <person name="Bielke C."/>
            <person name="Rudd S."/>
            <person name="Frishman D."/>
            <person name="Krystofova S."/>
            <person name="Rasmussen C."/>
            <person name="Metzenberg R.L."/>
            <person name="Perkins D.D."/>
            <person name="Kroken S."/>
            <person name="Cogoni C."/>
            <person name="Macino G."/>
            <person name="Catcheside D.E.A."/>
            <person name="Li W."/>
            <person name="Pratt R.J."/>
            <person name="Osmani S.A."/>
            <person name="DeSouza C.P.C."/>
            <person name="Glass N.L."/>
            <person name="Orbach M.J."/>
            <person name="Berglund J.A."/>
            <person name="Voelker R."/>
            <person name="Yarden O."/>
            <person name="Plamann M."/>
            <person name="Seiler S."/>
            <person name="Dunlap J.C."/>
            <person name="Radford A."/>
            <person name="Aramayo R."/>
            <person name="Natvig D.O."/>
            <person name="Alex L.A."/>
            <person name="Mannhaupt G."/>
            <person name="Ebbole D.J."/>
            <person name="Freitag M."/>
            <person name="Paulsen I."/>
            <person name="Sachs M.S."/>
            <person name="Lander E.S."/>
            <person name="Nusbaum C."/>
            <person name="Birren B.W."/>
        </authorList>
    </citation>
    <scope>NUCLEOTIDE SEQUENCE [LARGE SCALE GENOMIC DNA]</scope>
    <source>
        <strain>ATCC 24698 / 74-OR23-1A / CBS 708.71 / DSM 1257 / FGSC 987</strain>
    </source>
</reference>
<dbReference type="EMBL" id="BX842615">
    <property type="protein sequence ID" value="CAE76094.1"/>
    <property type="molecule type" value="Genomic_DNA"/>
</dbReference>
<dbReference type="EMBL" id="CM002240">
    <property type="protein sequence ID" value="EDO64947.2"/>
    <property type="molecule type" value="Genomic_DNA"/>
</dbReference>
<dbReference type="RefSeq" id="XP_001728038.2">
    <property type="nucleotide sequence ID" value="XM_001727986.2"/>
</dbReference>
<dbReference type="STRING" id="367110.Q6MW50"/>
<dbReference type="PaxDb" id="5141-EFNCRP00000008803"/>
<dbReference type="EnsemblFungi" id="EDO64947">
    <property type="protein sequence ID" value="EDO64947"/>
    <property type="gene ID" value="NCU10291"/>
</dbReference>
<dbReference type="GeneID" id="5847102"/>
<dbReference type="KEGG" id="ncr:NCU10291"/>
<dbReference type="VEuPathDB" id="FungiDB:NCU10291"/>
<dbReference type="HOGENOM" id="CLU_014731_0_0_1"/>
<dbReference type="InParanoid" id="Q6MW50"/>
<dbReference type="OrthoDB" id="1045822at2759"/>
<dbReference type="Proteomes" id="UP000001805">
    <property type="component" value="Chromosome 2, Linkage Group V"/>
</dbReference>
<dbReference type="InterPro" id="IPR006461">
    <property type="entry name" value="PLAC_motif_containing"/>
</dbReference>
<dbReference type="Pfam" id="PF04749">
    <property type="entry name" value="PLAC8"/>
    <property type="match status" value="1"/>
</dbReference>
<evidence type="ECO:0000256" key="1">
    <source>
        <dbReference type="SAM" id="MobiDB-lite"/>
    </source>
</evidence>
<organism>
    <name type="scientific">Neurospora crassa (strain ATCC 24698 / 74-OR23-1A / CBS 708.71 / DSM 1257 / FGSC 987)</name>
    <dbReference type="NCBI Taxonomy" id="367110"/>
    <lineage>
        <taxon>Eukaryota</taxon>
        <taxon>Fungi</taxon>
        <taxon>Dikarya</taxon>
        <taxon>Ascomycota</taxon>
        <taxon>Pezizomycotina</taxon>
        <taxon>Sordariomycetes</taxon>
        <taxon>Sordariomycetidae</taxon>
        <taxon>Sordariales</taxon>
        <taxon>Sordariaceae</taxon>
        <taxon>Neurospora</taxon>
    </lineage>
</organism>
<accession>Q6MW50</accession>
<accession>A7UX93</accession>
<accession>Q7S791</accession>
<gene>
    <name type="ORF">B4B2.090</name>
    <name type="ORF">NCU08876</name>
    <name type="ORF">NCU10291</name>
</gene>
<keyword id="KW-1185">Reference proteome</keyword>
<sequence length="724" mass="78829">MEDREMSTKPESISSRPPEIPDNDWKISLYDPGDNDDCPRACFLPCDMFAHTRYRLDLIKQGRDPLDLTDYKDFNPTCWKFFGLCTGGFCIGSGIYTGRETTRIRQKYGIKGTAGDDMTRGIFCQPCSLIRNDLEIRQREGMKQEADLPPPRPLGEDYQPIFAIKPDGYKSEPRMTTPRGILKPIASPEISSPPDGQPALREVHFHEPGQGNAPNVAASYPAEGGHVSQSSFSPRTEGGPSTVNQRRSREGTLTPIEEADNQAGEERNKSTTLGPAMNTFQRTTSPPVMHVTTSDAPIQAPTPTRDHDRYGNGRGPDTDRLEVPVQSNTPARKSRFSEEFDAPSADEMFSKIPDAAPSSTLDAPPRLPQLPGAFDTPAMPPATVPAGSSDVPSQLPQLPGAFPSSSHSETPNMKPSALGQLTALRDVANQSPKVVTVEEAETSIAETIQDEADEAQVGDRPHDNSQDPQLDTLPPRDTRHRLNIDEQLAFLPPQAEAHDSGTNTVVPLPDQPEAHGPHMDAKVALAAARIKDHPIESDPRINSPKPISIRNHEFTEDKRLAVPRSDSPFKPGIHLDQRVPTPPALVRPHNRLEDRQTATPSPSADRENRNLAADVRTASPGLGSRRGGLMGGRPHSLRHDSRVGTPKHLENVHDLAADVRAPTGPVTPLAKSPEPRSPPPKRLAAASPALSASSISIGTRAHQLLEHFLEGNRKAAERENGNKS</sequence>
<name>YB290_NEUCR</name>
<feature type="chain" id="PRO_0000260180" description="Uncharacterized protein NCU10291">
    <location>
        <begin position="1"/>
        <end position="724"/>
    </location>
</feature>
<feature type="region of interest" description="Disordered" evidence="1">
    <location>
        <begin position="1"/>
        <end position="23"/>
    </location>
</feature>
<feature type="region of interest" description="Disordered" evidence="1">
    <location>
        <begin position="166"/>
        <end position="477"/>
    </location>
</feature>
<feature type="region of interest" description="Disordered" evidence="1">
    <location>
        <begin position="496"/>
        <end position="517"/>
    </location>
</feature>
<feature type="region of interest" description="Disordered" evidence="1">
    <location>
        <begin position="532"/>
        <end position="691"/>
    </location>
</feature>
<feature type="compositionally biased region" description="Polar residues" evidence="1">
    <location>
        <begin position="227"/>
        <end position="245"/>
    </location>
</feature>
<feature type="compositionally biased region" description="Polar residues" evidence="1">
    <location>
        <begin position="270"/>
        <end position="296"/>
    </location>
</feature>
<feature type="compositionally biased region" description="Basic and acidic residues" evidence="1">
    <location>
        <begin position="304"/>
        <end position="322"/>
    </location>
</feature>
<feature type="compositionally biased region" description="Polar residues" evidence="1">
    <location>
        <begin position="403"/>
        <end position="413"/>
    </location>
</feature>
<feature type="compositionally biased region" description="Basic and acidic residues" evidence="1">
    <location>
        <begin position="550"/>
        <end position="560"/>
    </location>
</feature>
<feature type="compositionally biased region" description="Basic and acidic residues" evidence="1">
    <location>
        <begin position="637"/>
        <end position="657"/>
    </location>
</feature>
<feature type="compositionally biased region" description="Low complexity" evidence="1">
    <location>
        <begin position="682"/>
        <end position="691"/>
    </location>
</feature>
<protein>
    <recommendedName>
        <fullName>Uncharacterized protein NCU10291</fullName>
    </recommendedName>
</protein>